<evidence type="ECO:0000255" key="1">
    <source>
        <dbReference type="HAMAP-Rule" id="MF_00244"/>
    </source>
</evidence>
<sequence length="188" mass="22397">MVLVYGGSFNPPTIAHEAIIHKLHEEFKPKKILIVPTGNYFSWKTDLIDFEHRFKMVELMTQHLDYVEISRLENTKAFLGSYHTLNELSKRYDDLYFVVGADHIKTLDQWKDYKKLIENYKFILLTRNNYTFDDDLLSKLGLKYEKMMFQSDISSSEIRKNLNQNLDKLNLNVKTYILENKLYEEVKV</sequence>
<protein>
    <recommendedName>
        <fullName evidence="1">Probable nicotinate-nucleotide adenylyltransferase</fullName>
        <ecNumber evidence="1">2.7.7.18</ecNumber>
    </recommendedName>
    <alternativeName>
        <fullName evidence="1">Deamido-NAD(+) diphosphorylase</fullName>
    </alternativeName>
    <alternativeName>
        <fullName evidence="1">Deamido-NAD(+) pyrophosphorylase</fullName>
    </alternativeName>
    <alternativeName>
        <fullName evidence="1">Nicotinate mononucleotide adenylyltransferase</fullName>
        <shortName evidence="1">NaMN adenylyltransferase</shortName>
    </alternativeName>
</protein>
<gene>
    <name evidence="1" type="primary">nadD</name>
    <name type="ordered locus">ACL_0557</name>
</gene>
<keyword id="KW-0067">ATP-binding</keyword>
<keyword id="KW-0520">NAD</keyword>
<keyword id="KW-0547">Nucleotide-binding</keyword>
<keyword id="KW-0548">Nucleotidyltransferase</keyword>
<keyword id="KW-0662">Pyridine nucleotide biosynthesis</keyword>
<keyword id="KW-1185">Reference proteome</keyword>
<keyword id="KW-0808">Transferase</keyword>
<comment type="function">
    <text evidence="1">Catalyzes the reversible adenylation of nicotinate mononucleotide (NaMN) to nicotinic acid adenine dinucleotide (NaAD).</text>
</comment>
<comment type="catalytic activity">
    <reaction evidence="1">
        <text>nicotinate beta-D-ribonucleotide + ATP + H(+) = deamido-NAD(+) + diphosphate</text>
        <dbReference type="Rhea" id="RHEA:22860"/>
        <dbReference type="ChEBI" id="CHEBI:15378"/>
        <dbReference type="ChEBI" id="CHEBI:30616"/>
        <dbReference type="ChEBI" id="CHEBI:33019"/>
        <dbReference type="ChEBI" id="CHEBI:57502"/>
        <dbReference type="ChEBI" id="CHEBI:58437"/>
        <dbReference type="EC" id="2.7.7.18"/>
    </reaction>
</comment>
<comment type="pathway">
    <text evidence="1">Cofactor biosynthesis; NAD(+) biosynthesis; deamido-NAD(+) from nicotinate D-ribonucleotide: step 1/1.</text>
</comment>
<comment type="similarity">
    <text evidence="1">Belongs to the NadD family.</text>
</comment>
<proteinExistence type="inferred from homology"/>
<feature type="chain" id="PRO_0000336674" description="Probable nicotinate-nucleotide adenylyltransferase">
    <location>
        <begin position="1"/>
        <end position="188"/>
    </location>
</feature>
<accession>A9NFP5</accession>
<organism>
    <name type="scientific">Acholeplasma laidlawii (strain PG-8A)</name>
    <dbReference type="NCBI Taxonomy" id="441768"/>
    <lineage>
        <taxon>Bacteria</taxon>
        <taxon>Bacillati</taxon>
        <taxon>Mycoplasmatota</taxon>
        <taxon>Mollicutes</taxon>
        <taxon>Acholeplasmatales</taxon>
        <taxon>Acholeplasmataceae</taxon>
        <taxon>Acholeplasma</taxon>
    </lineage>
</organism>
<dbReference type="EC" id="2.7.7.18" evidence="1"/>
<dbReference type="EMBL" id="CP000896">
    <property type="protein sequence ID" value="ABX81175.1"/>
    <property type="molecule type" value="Genomic_DNA"/>
</dbReference>
<dbReference type="RefSeq" id="WP_012242506.1">
    <property type="nucleotide sequence ID" value="NC_010163.1"/>
</dbReference>
<dbReference type="SMR" id="A9NFP5"/>
<dbReference type="STRING" id="441768.ACL_0557"/>
<dbReference type="GeneID" id="41338735"/>
<dbReference type="KEGG" id="acl:ACL_0557"/>
<dbReference type="eggNOG" id="COG1057">
    <property type="taxonomic scope" value="Bacteria"/>
</dbReference>
<dbReference type="HOGENOM" id="CLU_069765_3_2_14"/>
<dbReference type="OrthoDB" id="5295945at2"/>
<dbReference type="UniPathway" id="UPA00253">
    <property type="reaction ID" value="UER00332"/>
</dbReference>
<dbReference type="Proteomes" id="UP000008558">
    <property type="component" value="Chromosome"/>
</dbReference>
<dbReference type="GO" id="GO:0005524">
    <property type="term" value="F:ATP binding"/>
    <property type="evidence" value="ECO:0007669"/>
    <property type="project" value="UniProtKB-KW"/>
</dbReference>
<dbReference type="GO" id="GO:0004515">
    <property type="term" value="F:nicotinate-nucleotide adenylyltransferase activity"/>
    <property type="evidence" value="ECO:0007669"/>
    <property type="project" value="UniProtKB-UniRule"/>
</dbReference>
<dbReference type="GO" id="GO:0009435">
    <property type="term" value="P:NAD biosynthetic process"/>
    <property type="evidence" value="ECO:0007669"/>
    <property type="project" value="UniProtKB-UniRule"/>
</dbReference>
<dbReference type="CDD" id="cd02165">
    <property type="entry name" value="NMNAT"/>
    <property type="match status" value="1"/>
</dbReference>
<dbReference type="Gene3D" id="3.40.50.620">
    <property type="entry name" value="HUPs"/>
    <property type="match status" value="1"/>
</dbReference>
<dbReference type="HAMAP" id="MF_00244">
    <property type="entry name" value="NaMN_adenylyltr"/>
    <property type="match status" value="1"/>
</dbReference>
<dbReference type="InterPro" id="IPR004821">
    <property type="entry name" value="Cyt_trans-like"/>
</dbReference>
<dbReference type="InterPro" id="IPR005248">
    <property type="entry name" value="NadD/NMNAT"/>
</dbReference>
<dbReference type="InterPro" id="IPR014729">
    <property type="entry name" value="Rossmann-like_a/b/a_fold"/>
</dbReference>
<dbReference type="NCBIfam" id="TIGR00482">
    <property type="entry name" value="nicotinate (nicotinamide) nucleotide adenylyltransferase"/>
    <property type="match status" value="1"/>
</dbReference>
<dbReference type="PANTHER" id="PTHR39321">
    <property type="entry name" value="NICOTINATE-NUCLEOTIDE ADENYLYLTRANSFERASE-RELATED"/>
    <property type="match status" value="1"/>
</dbReference>
<dbReference type="PANTHER" id="PTHR39321:SF3">
    <property type="entry name" value="PHOSPHOPANTETHEINE ADENYLYLTRANSFERASE"/>
    <property type="match status" value="1"/>
</dbReference>
<dbReference type="Pfam" id="PF01467">
    <property type="entry name" value="CTP_transf_like"/>
    <property type="match status" value="1"/>
</dbReference>
<dbReference type="SUPFAM" id="SSF52374">
    <property type="entry name" value="Nucleotidylyl transferase"/>
    <property type="match status" value="1"/>
</dbReference>
<reference key="1">
    <citation type="journal article" date="2011" name="J. Bacteriol.">
        <title>Complete genome and proteome of Acholeplasma laidlawii.</title>
        <authorList>
            <person name="Lazarev V.N."/>
            <person name="Levitskii S.A."/>
            <person name="Basovskii Y.I."/>
            <person name="Chukin M.M."/>
            <person name="Akopian T.A."/>
            <person name="Vereshchagin V.V."/>
            <person name="Kostrjukova E.S."/>
            <person name="Kovaleva G.Y."/>
            <person name="Kazanov M.D."/>
            <person name="Malko D.B."/>
            <person name="Vitreschak A.G."/>
            <person name="Sernova N.V."/>
            <person name="Gelfand M.S."/>
            <person name="Demina I.A."/>
            <person name="Serebryakova M.V."/>
            <person name="Galyamina M.A."/>
            <person name="Vtyurin N.N."/>
            <person name="Rogov S.I."/>
            <person name="Alexeev D.G."/>
            <person name="Ladygina V.G."/>
            <person name="Govorun V.M."/>
        </authorList>
    </citation>
    <scope>NUCLEOTIDE SEQUENCE [LARGE SCALE GENOMIC DNA]</scope>
    <source>
        <strain>PG-8A</strain>
    </source>
</reference>
<name>NADD_ACHLI</name>